<evidence type="ECO:0000250" key="1"/>
<evidence type="ECO:0000255" key="2"/>
<evidence type="ECO:0000305" key="3"/>
<reference key="1">
    <citation type="online journal article" date="1998" name="Plant Gene Register">
        <title>The GDCST gene encoding T-protein of the glycine cleavage system in the C4 plant Flaveria trinervia.</title>
        <authorList>
            <person name="Cossu R."/>
            <person name="Bauwe H."/>
        </authorList>
        <locator>PGR98-007</locator>
    </citation>
    <scope>NUCLEOTIDE SEQUENCE [GENOMIC DNA]</scope>
    <source>
        <tissue>Leaf</tissue>
    </source>
</reference>
<dbReference type="EC" id="2.1.2.10"/>
<dbReference type="EMBL" id="Z99769">
    <property type="protein sequence ID" value="CAB16917.1"/>
    <property type="molecule type" value="Genomic_DNA"/>
</dbReference>
<dbReference type="SMR" id="O23936"/>
<dbReference type="GO" id="GO:0005960">
    <property type="term" value="C:glycine cleavage complex"/>
    <property type="evidence" value="ECO:0007669"/>
    <property type="project" value="InterPro"/>
</dbReference>
<dbReference type="GO" id="GO:0005739">
    <property type="term" value="C:mitochondrion"/>
    <property type="evidence" value="ECO:0007669"/>
    <property type="project" value="UniProtKB-SubCell"/>
</dbReference>
<dbReference type="GO" id="GO:0004047">
    <property type="term" value="F:aminomethyltransferase activity"/>
    <property type="evidence" value="ECO:0007669"/>
    <property type="project" value="UniProtKB-EC"/>
</dbReference>
<dbReference type="GO" id="GO:0008483">
    <property type="term" value="F:transaminase activity"/>
    <property type="evidence" value="ECO:0007669"/>
    <property type="project" value="UniProtKB-KW"/>
</dbReference>
<dbReference type="GO" id="GO:0006546">
    <property type="term" value="P:glycine catabolic process"/>
    <property type="evidence" value="ECO:0007669"/>
    <property type="project" value="InterPro"/>
</dbReference>
<dbReference type="FunFam" id="2.40.30.110:FF:000002">
    <property type="entry name" value="Aminomethyltransferase"/>
    <property type="match status" value="1"/>
</dbReference>
<dbReference type="FunFam" id="3.30.1360.120:FF:000014">
    <property type="entry name" value="Aminomethyltransferase"/>
    <property type="match status" value="1"/>
</dbReference>
<dbReference type="FunFam" id="3.30.70.1400:FF:000001">
    <property type="entry name" value="Aminomethyltransferase"/>
    <property type="match status" value="1"/>
</dbReference>
<dbReference type="FunFam" id="4.10.1250.10:FF:000002">
    <property type="entry name" value="Aminomethyltransferase"/>
    <property type="match status" value="1"/>
</dbReference>
<dbReference type="Gene3D" id="2.40.30.110">
    <property type="entry name" value="Aminomethyltransferase beta-barrel domains"/>
    <property type="match status" value="1"/>
</dbReference>
<dbReference type="Gene3D" id="3.30.70.1400">
    <property type="entry name" value="Aminomethyltransferase beta-barrel domains"/>
    <property type="match status" value="1"/>
</dbReference>
<dbReference type="Gene3D" id="4.10.1250.10">
    <property type="entry name" value="Aminomethyltransferase fragment"/>
    <property type="match status" value="1"/>
</dbReference>
<dbReference type="Gene3D" id="3.30.1360.120">
    <property type="entry name" value="Probable tRNA modification gtpase trme, domain 1"/>
    <property type="match status" value="1"/>
</dbReference>
<dbReference type="InterPro" id="IPR006223">
    <property type="entry name" value="GCS_T"/>
</dbReference>
<dbReference type="InterPro" id="IPR013977">
    <property type="entry name" value="GCST_C"/>
</dbReference>
<dbReference type="InterPro" id="IPR006222">
    <property type="entry name" value="GCV_T_N"/>
</dbReference>
<dbReference type="InterPro" id="IPR028896">
    <property type="entry name" value="GcvT/YgfZ/DmdA"/>
</dbReference>
<dbReference type="InterPro" id="IPR029043">
    <property type="entry name" value="GcvT/YgfZ_C"/>
</dbReference>
<dbReference type="InterPro" id="IPR027266">
    <property type="entry name" value="TrmE/GcvT_dom1"/>
</dbReference>
<dbReference type="NCBIfam" id="TIGR00528">
    <property type="entry name" value="gcvT"/>
    <property type="match status" value="1"/>
</dbReference>
<dbReference type="NCBIfam" id="NF001567">
    <property type="entry name" value="PRK00389.1"/>
    <property type="match status" value="1"/>
</dbReference>
<dbReference type="PANTHER" id="PTHR43757">
    <property type="entry name" value="AMINOMETHYLTRANSFERASE"/>
    <property type="match status" value="1"/>
</dbReference>
<dbReference type="PANTHER" id="PTHR43757:SF2">
    <property type="entry name" value="AMINOMETHYLTRANSFERASE, MITOCHONDRIAL"/>
    <property type="match status" value="1"/>
</dbReference>
<dbReference type="Pfam" id="PF01571">
    <property type="entry name" value="GCV_T"/>
    <property type="match status" value="1"/>
</dbReference>
<dbReference type="Pfam" id="PF08669">
    <property type="entry name" value="GCV_T_C"/>
    <property type="match status" value="1"/>
</dbReference>
<dbReference type="PIRSF" id="PIRSF006487">
    <property type="entry name" value="GcvT"/>
    <property type="match status" value="1"/>
</dbReference>
<dbReference type="SUPFAM" id="SSF101790">
    <property type="entry name" value="Aminomethyltransferase beta-barrel domain"/>
    <property type="match status" value="1"/>
</dbReference>
<dbReference type="SUPFAM" id="SSF103025">
    <property type="entry name" value="Folate-binding domain"/>
    <property type="match status" value="1"/>
</dbReference>
<comment type="function">
    <text>The glycine cleavage system catalyzes the degradation of glycine.</text>
</comment>
<comment type="catalytic activity">
    <reaction>
        <text>N(6)-[(R)-S(8)-aminomethyldihydrolipoyl]-L-lysyl-[protein] + (6S)-5,6,7,8-tetrahydrofolate = N(6)-[(R)-dihydrolipoyl]-L-lysyl-[protein] + (6R)-5,10-methylene-5,6,7,8-tetrahydrofolate + NH4(+)</text>
        <dbReference type="Rhea" id="RHEA:16945"/>
        <dbReference type="Rhea" id="RHEA-COMP:10475"/>
        <dbReference type="Rhea" id="RHEA-COMP:10492"/>
        <dbReference type="ChEBI" id="CHEBI:15636"/>
        <dbReference type="ChEBI" id="CHEBI:28938"/>
        <dbReference type="ChEBI" id="CHEBI:57453"/>
        <dbReference type="ChEBI" id="CHEBI:83100"/>
        <dbReference type="ChEBI" id="CHEBI:83143"/>
        <dbReference type="EC" id="2.1.2.10"/>
    </reaction>
</comment>
<comment type="subunit">
    <text>The glycine cleavage system is composed of four proteins: P, T, L and H.</text>
</comment>
<comment type="subcellular location">
    <subcellularLocation>
        <location>Mitochondrion</location>
    </subcellularLocation>
</comment>
<comment type="similarity">
    <text evidence="3">Belongs to the GcvT family.</text>
</comment>
<protein>
    <recommendedName>
        <fullName>Aminomethyltransferase, mitochondrial</fullName>
        <ecNumber>2.1.2.10</ecNumber>
    </recommendedName>
    <alternativeName>
        <fullName>Glycine cleavage system T protein</fullName>
        <shortName>GCVT</shortName>
    </alternativeName>
</protein>
<proteinExistence type="inferred from homology"/>
<sequence>MRGGLWQVGQSITRRLGQSDKKTIVRRWYASEADLKKTVLYDFHVANGGKMVPFAGWSMPIQYKDSIMESTINCRENGSLFDVSHMCGLSLKGKDCVAFLEKLVVADVAGLAPGTGSLTVFTNEKGGAIDDSVITKVTDDHIYLVVNAGCRDKDLAHIEQHMKAFKAKGGDVSWHIHDERSLLALQGPLAGSTLQHLTKDDLSKMYFGDFRIIDISGSKCFLTRTGYTGEDGFEISVPSENAVDLAKAILEKSEGKVRLTGLGARDSLRLEAGLCLYGNDMEQHITPVEAGLTWAIGKRRRAEGGFLGAEVILKQIADGPAIRRVGLFSTGPPARSHSEIQNEQGENIGEVTSGGFSPCLKKNIGMGYVKSGLHKPGTKLKIVIRGKTYEGSVTKMPFVPTKYYKPA</sequence>
<gene>
    <name type="primary">GDCST</name>
</gene>
<organism>
    <name type="scientific">Flaveria trinervia</name>
    <name type="common">Clustered yellowtops</name>
    <name type="synonym">Oedera trinervia</name>
    <dbReference type="NCBI Taxonomy" id="4227"/>
    <lineage>
        <taxon>Eukaryota</taxon>
        <taxon>Viridiplantae</taxon>
        <taxon>Streptophyta</taxon>
        <taxon>Embryophyta</taxon>
        <taxon>Tracheophyta</taxon>
        <taxon>Spermatophyta</taxon>
        <taxon>Magnoliopsida</taxon>
        <taxon>eudicotyledons</taxon>
        <taxon>Gunneridae</taxon>
        <taxon>Pentapetalae</taxon>
        <taxon>asterids</taxon>
        <taxon>campanulids</taxon>
        <taxon>Asterales</taxon>
        <taxon>Asteraceae</taxon>
        <taxon>Asteroideae</taxon>
        <taxon>Heliantheae alliance</taxon>
        <taxon>Tageteae</taxon>
        <taxon>Flaveria</taxon>
    </lineage>
</organism>
<keyword id="KW-0032">Aminotransferase</keyword>
<keyword id="KW-0496">Mitochondrion</keyword>
<keyword id="KW-0808">Transferase</keyword>
<keyword id="KW-0809">Transit peptide</keyword>
<name>GCST_FLATR</name>
<feature type="transit peptide" description="Mitochondrion" evidence="2">
    <location>
        <begin position="1"/>
        <end position="29"/>
    </location>
</feature>
<feature type="chain" id="PRO_0000010761" description="Aminomethyltransferase, mitochondrial">
    <location>
        <begin position="30"/>
        <end position="407"/>
    </location>
</feature>
<feature type="binding site" evidence="1">
    <location>
        <position position="234"/>
    </location>
    <ligand>
        <name>substrate</name>
    </ligand>
</feature>
<feature type="binding site" evidence="1">
    <location>
        <position position="265"/>
    </location>
    <ligand>
        <name>substrate</name>
    </ligand>
</feature>
<feature type="binding site" evidence="1">
    <location>
        <position position="403"/>
    </location>
    <ligand>
        <name>substrate</name>
    </ligand>
</feature>
<accession>O23936</accession>